<gene>
    <name evidence="3" type="primary">pvcA</name>
    <name evidence="6" type="ordered locus">PA2254</name>
</gene>
<evidence type="ECO:0000269" key="1">
    <source>
    </source>
</evidence>
<evidence type="ECO:0000269" key="2">
    <source>
    </source>
</evidence>
<evidence type="ECO:0000303" key="3">
    <source>
    </source>
</evidence>
<evidence type="ECO:0000305" key="4"/>
<evidence type="ECO:0000305" key="5">
    <source>
    </source>
</evidence>
<evidence type="ECO:0000312" key="6">
    <source>
        <dbReference type="EMBL" id="AAG05642.1"/>
    </source>
</evidence>
<evidence type="ECO:0007744" key="7">
    <source>
        <dbReference type="PDB" id="3E59"/>
    </source>
</evidence>
<evidence type="ECO:0007829" key="8">
    <source>
        <dbReference type="PDB" id="3E59"/>
    </source>
</evidence>
<dbReference type="EC" id="4.1.99.24" evidence="5"/>
<dbReference type="EMBL" id="AE004091">
    <property type="protein sequence ID" value="AAG05642.1"/>
    <property type="molecule type" value="Genomic_DNA"/>
</dbReference>
<dbReference type="PIR" id="H83363">
    <property type="entry name" value="H83363"/>
</dbReference>
<dbReference type="RefSeq" id="NP_250944.1">
    <property type="nucleotide sequence ID" value="NC_002516.2"/>
</dbReference>
<dbReference type="RefSeq" id="WP_003113733.1">
    <property type="nucleotide sequence ID" value="NZ_QZGE01000014.1"/>
</dbReference>
<dbReference type="PDB" id="3E59">
    <property type="method" value="X-ray"/>
    <property type="resolution" value="2.10 A"/>
    <property type="chains" value="A/B/C/D=1-328"/>
</dbReference>
<dbReference type="PDBsum" id="3E59"/>
<dbReference type="SMR" id="Q9I1L5"/>
<dbReference type="STRING" id="208964.PA2254"/>
<dbReference type="PaxDb" id="208964-PA2254"/>
<dbReference type="DNASU" id="878099"/>
<dbReference type="GeneID" id="878099"/>
<dbReference type="KEGG" id="pae:PA2254"/>
<dbReference type="PATRIC" id="fig|208964.12.peg.2356"/>
<dbReference type="PseudoCAP" id="PA2254"/>
<dbReference type="HOGENOM" id="CLU_038280_0_0_6"/>
<dbReference type="InParanoid" id="Q9I1L5"/>
<dbReference type="OrthoDB" id="860574at2"/>
<dbReference type="BioCyc" id="MetaCyc:MONOMER-20393"/>
<dbReference type="BioCyc" id="PAER208964:G1FZ6-2293-MONOMER"/>
<dbReference type="BRENDA" id="4.1.99.24">
    <property type="organism ID" value="5087"/>
</dbReference>
<dbReference type="EvolutionaryTrace" id="Q9I1L5"/>
<dbReference type="Proteomes" id="UP000002438">
    <property type="component" value="Chromosome"/>
</dbReference>
<dbReference type="GO" id="GO:0016829">
    <property type="term" value="F:lyase activity"/>
    <property type="evidence" value="ECO:0007669"/>
    <property type="project" value="UniProtKB-KW"/>
</dbReference>
<dbReference type="Gene3D" id="3.30.60.140">
    <property type="match status" value="1"/>
</dbReference>
<dbReference type="InterPro" id="IPR007817">
    <property type="entry name" value="Isocyanide_synthase_DIT1"/>
</dbReference>
<dbReference type="InterPro" id="IPR017133">
    <property type="entry name" value="PvcA"/>
</dbReference>
<dbReference type="PANTHER" id="PTHR37285">
    <property type="entry name" value="SPORE WALL MATURATION PROTEIN DIT1"/>
    <property type="match status" value="1"/>
</dbReference>
<dbReference type="PANTHER" id="PTHR37285:SF5">
    <property type="entry name" value="SPORE WALL MATURATION PROTEIN DIT1"/>
    <property type="match status" value="1"/>
</dbReference>
<dbReference type="Pfam" id="PF05141">
    <property type="entry name" value="DIT1_PvcA"/>
    <property type="match status" value="1"/>
</dbReference>
<dbReference type="PIRSF" id="PIRSF037196">
    <property type="entry name" value="Pyoverdine_chromoph_PvcA"/>
    <property type="match status" value="1"/>
</dbReference>
<keyword id="KW-0002">3D-structure</keyword>
<keyword id="KW-0456">Lyase</keyword>
<keyword id="KW-1185">Reference proteome</keyword>
<name>PVCA_PSEAE</name>
<sequence length="328" mass="37134">MYAIAEDTLPARVLKELLLYRRRYPEHRQSASEADEIRRIEQVQLPRIAAFIEAGEPIEFVLPAFPAKSPNPGKVLDSRPDMAERLSLSFLNHLCQRIQLFYAPGAKITVCSDGRVFGDLVRIGDAHISAYQDALRLMIEEIGATHIGVFNLEDVRAFEAQRDNHEQLRQLLIGGYAEPLESIRETLLASEEGLLLYRAITRFLYEDGLTPDYQGSKTALQRDAKERAYGVIQRSWAWGALLADQFPRAIRLSIHPQPADSLKFGIHMMPTRDDWLTPWHGVAVNTEDRFVLMKRSEVLELGGELVQINGQPSHYRLPARAARRAAVA</sequence>
<feature type="chain" id="PRO_0000453966" description="L-tyrosine isonitrile synthase">
    <location>
        <begin position="1"/>
        <end position="328"/>
    </location>
</feature>
<feature type="helix" evidence="8">
    <location>
        <begin position="9"/>
        <end position="18"/>
    </location>
</feature>
<feature type="helix" evidence="8">
    <location>
        <begin position="25"/>
        <end position="28"/>
    </location>
</feature>
<feature type="helix" evidence="8">
    <location>
        <begin position="33"/>
        <end position="53"/>
    </location>
</feature>
<feature type="strand" evidence="8">
    <location>
        <begin position="58"/>
        <end position="62"/>
    </location>
</feature>
<feature type="turn" evidence="8">
    <location>
        <begin position="72"/>
        <end position="74"/>
    </location>
</feature>
<feature type="helix" evidence="8">
    <location>
        <begin position="82"/>
        <end position="101"/>
    </location>
</feature>
<feature type="strand" evidence="8">
    <location>
        <begin position="106"/>
        <end position="110"/>
    </location>
</feature>
<feature type="helix" evidence="8">
    <location>
        <begin position="114"/>
        <end position="117"/>
    </location>
</feature>
<feature type="helix" evidence="8">
    <location>
        <begin position="118"/>
        <end position="120"/>
    </location>
</feature>
<feature type="helix" evidence="8">
    <location>
        <begin position="125"/>
        <end position="142"/>
    </location>
</feature>
<feature type="strand" evidence="8">
    <location>
        <begin position="145"/>
        <end position="149"/>
    </location>
</feature>
<feature type="helix" evidence="8">
    <location>
        <begin position="152"/>
        <end position="154"/>
    </location>
</feature>
<feature type="helix" evidence="8">
    <location>
        <begin position="156"/>
        <end position="161"/>
    </location>
</feature>
<feature type="helix" evidence="8">
    <location>
        <begin position="165"/>
        <end position="176"/>
    </location>
</feature>
<feature type="helix" evidence="8">
    <location>
        <begin position="180"/>
        <end position="187"/>
    </location>
</feature>
<feature type="helix" evidence="8">
    <location>
        <begin position="191"/>
        <end position="208"/>
    </location>
</feature>
<feature type="helix" evidence="8">
    <location>
        <begin position="217"/>
        <end position="245"/>
    </location>
</feature>
<feature type="strand" evidence="8">
    <location>
        <begin position="246"/>
        <end position="255"/>
    </location>
</feature>
<feature type="strand" evidence="8">
    <location>
        <begin position="261"/>
        <end position="266"/>
    </location>
</feature>
<feature type="helix" evidence="8">
    <location>
        <begin position="278"/>
        <end position="280"/>
    </location>
</feature>
<feature type="strand" evidence="8">
    <location>
        <begin position="281"/>
        <end position="293"/>
    </location>
</feature>
<feature type="helix" evidence="8">
    <location>
        <begin position="295"/>
        <end position="300"/>
    </location>
</feature>
<feature type="strand" evidence="8">
    <location>
        <begin position="304"/>
        <end position="308"/>
    </location>
</feature>
<feature type="strand" evidence="8">
    <location>
        <begin position="311"/>
        <end position="317"/>
    </location>
</feature>
<reference key="1">
    <citation type="journal article" date="2000" name="Nature">
        <title>Complete genome sequence of Pseudomonas aeruginosa PAO1, an opportunistic pathogen.</title>
        <authorList>
            <person name="Stover C.K."/>
            <person name="Pham X.-Q.T."/>
            <person name="Erwin A.L."/>
            <person name="Mizoguchi S.D."/>
            <person name="Warrener P."/>
            <person name="Hickey M.J."/>
            <person name="Brinkman F.S.L."/>
            <person name="Hufnagle W.O."/>
            <person name="Kowalik D.J."/>
            <person name="Lagrou M."/>
            <person name="Garber R.L."/>
            <person name="Goltry L."/>
            <person name="Tolentino E."/>
            <person name="Westbrock-Wadman S."/>
            <person name="Yuan Y."/>
            <person name="Brody L.L."/>
            <person name="Coulter S.N."/>
            <person name="Folger K.R."/>
            <person name="Kas A."/>
            <person name="Larbig K."/>
            <person name="Lim R.M."/>
            <person name="Smith K.A."/>
            <person name="Spencer D.H."/>
            <person name="Wong G.K.-S."/>
            <person name="Wu Z."/>
            <person name="Paulsen I.T."/>
            <person name="Reizer J."/>
            <person name="Saier M.H. Jr."/>
            <person name="Hancock R.E.W."/>
            <person name="Lory S."/>
            <person name="Olson M.V."/>
        </authorList>
    </citation>
    <scope>NUCLEOTIDE SEQUENCE [LARGE SCALE GENOMIC DNA]</scope>
    <source>
        <strain>ATCC 15692 / DSM 22644 / CIP 104116 / JCM 14847 / LMG 12228 / 1C / PRS 101 / PAO1</strain>
    </source>
</reference>
<reference key="2">
    <citation type="journal article" date="2008" name="J. Bacteriol.">
        <title>Paerucumarin, a new metabolite produced by the pvc gene cluster from Pseudomonas aeruginosa.</title>
        <authorList>
            <person name="Clarke-Pearson M.F."/>
            <person name="Brady S.F."/>
        </authorList>
    </citation>
    <scope>FUNCTION</scope>
    <scope>DISRUPTION PHENOTYPE</scope>
</reference>
<reference evidence="7" key="3">
    <citation type="journal article" date="2008" name="J. Mol. Biol.">
        <title>Three-dimensional structures of Pseudomonas aeruginosa PvcA and PvcB, two proteins involved in the synthesis of 2-isocyano-6,7-dihydroxycoumarin.</title>
        <authorList>
            <person name="Drake E.J."/>
            <person name="Gulick A.M."/>
        </authorList>
    </citation>
    <scope>X-RAY CRYSTALLOGRAPHY (2.10 ANGSTROMS)</scope>
    <scope>FUNCTION</scope>
    <scope>SUBUNIT</scope>
    <scope>DISRUPTION PHENOTYPE</scope>
    <source>
        <strain>ATCC 15692 / DSM 22644 / CIP 104116 / JCM 14847 / LMG 12228 / 1C / PRS 101 / PAO1</strain>
    </source>
</reference>
<protein>
    <recommendedName>
        <fullName evidence="4">L-tyrosine isonitrile synthase</fullName>
        <ecNumber evidence="5">4.1.99.24</ecNumber>
    </recommendedName>
    <alternativeName>
        <fullName evidence="4">Paerucumarin biosynthesis protein PvcA</fullName>
    </alternativeName>
</protein>
<proteinExistence type="evidence at protein level"/>
<accession>Q9I1L5</accession>
<organism>
    <name type="scientific">Pseudomonas aeruginosa (strain ATCC 15692 / DSM 22644 / CIP 104116 / JCM 14847 / LMG 12228 / 1C / PRS 101 / PAO1)</name>
    <dbReference type="NCBI Taxonomy" id="208964"/>
    <lineage>
        <taxon>Bacteria</taxon>
        <taxon>Pseudomonadati</taxon>
        <taxon>Pseudomonadota</taxon>
        <taxon>Gammaproteobacteria</taxon>
        <taxon>Pseudomonadales</taxon>
        <taxon>Pseudomonadaceae</taxon>
        <taxon>Pseudomonas</taxon>
    </lineage>
</organism>
<comment type="function">
    <text evidence="1 2 5">Involved in the biosynthesis of paerucumarin, a cyclized isocyano derivative of tyrosine (PubMed:18689486, PubMed:18824174). Responsible for the synthesis of the isonitrile group on tyrosine using the C2 of ribulose 5-phosphate as the source of the carbon atom (Probable).</text>
</comment>
<comment type="catalytic activity">
    <reaction evidence="5">
        <text>D-ribulose 5-phosphate + L-tyrosine = (2S)-3-(4-hydroxyphenyl)-2-isocyanopropanoate + hydroxyacetone + formaldehyde + phosphate + H2O + H(+)</text>
        <dbReference type="Rhea" id="RHEA:45732"/>
        <dbReference type="ChEBI" id="CHEBI:15377"/>
        <dbReference type="ChEBI" id="CHEBI:15378"/>
        <dbReference type="ChEBI" id="CHEBI:16842"/>
        <dbReference type="ChEBI" id="CHEBI:27957"/>
        <dbReference type="ChEBI" id="CHEBI:43474"/>
        <dbReference type="ChEBI" id="CHEBI:58121"/>
        <dbReference type="ChEBI" id="CHEBI:58315"/>
        <dbReference type="ChEBI" id="CHEBI:140647"/>
        <dbReference type="EC" id="4.1.99.24"/>
    </reaction>
    <physiologicalReaction direction="left-to-right" evidence="5">
        <dbReference type="Rhea" id="RHEA:45733"/>
    </physiologicalReaction>
</comment>
<comment type="subunit">
    <text evidence="2">Monomer in solution.</text>
</comment>
<comment type="disruption phenotype">
    <text evidence="1 2">Disruption of the gene maintains the ability of the strain to produce the pyoverdine siderophore (PubMed:18689486, PubMed:18824174). Disruption mutant cannot produce paerucumarin (PubMed:18689486).</text>
</comment>
<comment type="similarity">
    <text evidence="4">Belongs to the isocyanide synthase family.</text>
</comment>